<feature type="chain" id="PRO_0000139422" description="Senescence-associated protein DIN1">
    <location>
        <begin position="1"/>
        <end position="183"/>
    </location>
</feature>
<feature type="domain" description="Rhodanese" evidence="1">
    <location>
        <begin position="83"/>
        <end position="183"/>
    </location>
</feature>
<dbReference type="EMBL" id="M63731">
    <property type="protein sequence ID" value="AAA33867.1"/>
    <property type="molecule type" value="mRNA"/>
</dbReference>
<dbReference type="PIR" id="T10192">
    <property type="entry name" value="T10192"/>
</dbReference>
<dbReference type="SMR" id="P27626"/>
<dbReference type="Proteomes" id="UP000504610">
    <property type="component" value="Unplaced"/>
</dbReference>
<dbReference type="CDD" id="cd00158">
    <property type="entry name" value="RHOD"/>
    <property type="match status" value="1"/>
</dbReference>
<dbReference type="FunFam" id="3.40.250.10:FF:000062">
    <property type="entry name" value="Thiosulfate sulfurtransferase 16, chloroplastic"/>
    <property type="match status" value="1"/>
</dbReference>
<dbReference type="Gene3D" id="3.40.250.10">
    <property type="entry name" value="Rhodanese-like domain"/>
    <property type="match status" value="1"/>
</dbReference>
<dbReference type="InterPro" id="IPR001763">
    <property type="entry name" value="Rhodanese-like_dom"/>
</dbReference>
<dbReference type="InterPro" id="IPR036873">
    <property type="entry name" value="Rhodanese-like_dom_sf"/>
</dbReference>
<dbReference type="InterPro" id="IPR052367">
    <property type="entry name" value="Thiosulfate_ST/Rhodanese-like"/>
</dbReference>
<dbReference type="PANTHER" id="PTHR45431">
    <property type="entry name" value="RHODANESE-LIKE DOMAIN-CONTAINING PROTEIN 15, CHLOROPLASTIC"/>
    <property type="match status" value="1"/>
</dbReference>
<dbReference type="PANTHER" id="PTHR45431:SF3">
    <property type="entry name" value="RHODANESE-LIKE DOMAIN-CONTAINING PROTEIN 15, CHLOROPLASTIC"/>
    <property type="match status" value="1"/>
</dbReference>
<dbReference type="Pfam" id="PF00581">
    <property type="entry name" value="Rhodanese"/>
    <property type="match status" value="1"/>
</dbReference>
<dbReference type="SMART" id="SM00450">
    <property type="entry name" value="RHOD"/>
    <property type="match status" value="1"/>
</dbReference>
<dbReference type="SUPFAM" id="SSF52821">
    <property type="entry name" value="Rhodanese/Cell cycle control phosphatase"/>
    <property type="match status" value="1"/>
</dbReference>
<dbReference type="PROSITE" id="PS50206">
    <property type="entry name" value="RHODANESE_3"/>
    <property type="match status" value="1"/>
</dbReference>
<accession>P27626</accession>
<gene>
    <name type="primary">DIN1</name>
</gene>
<sequence>MESTLNTTARIGSWSSFISPPLQVCESFKWKLPKATRRVVSVADRQNSNFRWRKVTTGRANVAAEAAARVPTSVPVRVARELAQAGYKHLDVRTPDEFSIGHPSRAINVPYMYRVGSGMVKNPSFLRQVSSHFRKHDEIIIGCESGERSLMASTELLTAGFTGVTDIAGGYVPWTENELPVEE</sequence>
<reference key="1">
    <citation type="journal article" date="1991" name="Plant Physiol.">
        <title>Evidence for a senescence-associated gene induced by darkness.</title>
        <authorList>
            <person name="Azumi Y."/>
            <person name="Watanabe A."/>
        </authorList>
    </citation>
    <scope>NUCLEOTIDE SEQUENCE [MRNA]</scope>
    <source>
        <tissue>Cotyledon</tissue>
    </source>
</reference>
<comment type="function">
    <text>Is thought to act during the early stages of leaf senescence.</text>
</comment>
<comment type="induction">
    <text>By darkness, ethylene, cytokinin and heat stress.</text>
</comment>
<organism>
    <name type="scientific">Raphanus sativus</name>
    <name type="common">Radish</name>
    <name type="synonym">Raphanus raphanistrum var. sativus</name>
    <dbReference type="NCBI Taxonomy" id="3726"/>
    <lineage>
        <taxon>Eukaryota</taxon>
        <taxon>Viridiplantae</taxon>
        <taxon>Streptophyta</taxon>
        <taxon>Embryophyta</taxon>
        <taxon>Tracheophyta</taxon>
        <taxon>Spermatophyta</taxon>
        <taxon>Magnoliopsida</taxon>
        <taxon>eudicotyledons</taxon>
        <taxon>Gunneridae</taxon>
        <taxon>Pentapetalae</taxon>
        <taxon>rosids</taxon>
        <taxon>malvids</taxon>
        <taxon>Brassicales</taxon>
        <taxon>Brassicaceae</taxon>
        <taxon>Brassiceae</taxon>
        <taxon>Raphanus</taxon>
    </lineage>
</organism>
<protein>
    <recommendedName>
        <fullName>Senescence-associated protein DIN1</fullName>
    </recommendedName>
</protein>
<name>DIN1_RAPSA</name>
<proteinExistence type="evidence at transcript level"/>
<evidence type="ECO:0000255" key="1">
    <source>
        <dbReference type="PROSITE-ProRule" id="PRU00173"/>
    </source>
</evidence>
<keyword id="KW-1185">Reference proteome</keyword>